<organism>
    <name type="scientific">Aeromonas hydrophila subsp. hydrophila (strain ATCC 7966 / DSM 30187 / BCRC 13018 / CCUG 14551 / JCM 1027 / KCTC 2358 / NCIMB 9240 / NCTC 8049)</name>
    <dbReference type="NCBI Taxonomy" id="380703"/>
    <lineage>
        <taxon>Bacteria</taxon>
        <taxon>Pseudomonadati</taxon>
        <taxon>Pseudomonadota</taxon>
        <taxon>Gammaproteobacteria</taxon>
        <taxon>Aeromonadales</taxon>
        <taxon>Aeromonadaceae</taxon>
        <taxon>Aeromonas</taxon>
    </lineage>
</organism>
<proteinExistence type="inferred from homology"/>
<protein>
    <recommendedName>
        <fullName evidence="1">Nucleotide-binding protein AHA_1129</fullName>
    </recommendedName>
</protein>
<reference key="1">
    <citation type="journal article" date="2006" name="J. Bacteriol.">
        <title>Genome sequence of Aeromonas hydrophila ATCC 7966T: jack of all trades.</title>
        <authorList>
            <person name="Seshadri R."/>
            <person name="Joseph S.W."/>
            <person name="Chopra A.K."/>
            <person name="Sha J."/>
            <person name="Shaw J."/>
            <person name="Graf J."/>
            <person name="Haft D.H."/>
            <person name="Wu M."/>
            <person name="Ren Q."/>
            <person name="Rosovitz M.J."/>
            <person name="Madupu R."/>
            <person name="Tallon L."/>
            <person name="Kim M."/>
            <person name="Jin S."/>
            <person name="Vuong H."/>
            <person name="Stine O.C."/>
            <person name="Ali A."/>
            <person name="Horneman A.J."/>
            <person name="Heidelberg J.F."/>
        </authorList>
    </citation>
    <scope>NUCLEOTIDE SEQUENCE [LARGE SCALE GENOMIC DNA]</scope>
    <source>
        <strain>ATCC 7966 / DSM 30187 / BCRC 13018 / CCUG 14551 / JCM 1027 / KCTC 2358 / NCIMB 9240 / NCTC 8049</strain>
    </source>
</reference>
<comment type="function">
    <text evidence="1">Nucleotide-binding protein.</text>
</comment>
<comment type="similarity">
    <text evidence="1">Belongs to the YajQ family.</text>
</comment>
<feature type="chain" id="PRO_1000051712" description="Nucleotide-binding protein AHA_1129">
    <location>
        <begin position="1"/>
        <end position="160"/>
    </location>
</feature>
<name>Y1129_AERHH</name>
<accession>A0KHB9</accession>
<dbReference type="EMBL" id="CP000462">
    <property type="protein sequence ID" value="ABK37654.1"/>
    <property type="molecule type" value="Genomic_DNA"/>
</dbReference>
<dbReference type="RefSeq" id="WP_011705055.1">
    <property type="nucleotide sequence ID" value="NC_008570.1"/>
</dbReference>
<dbReference type="RefSeq" id="YP_855670.1">
    <property type="nucleotide sequence ID" value="NC_008570.1"/>
</dbReference>
<dbReference type="SMR" id="A0KHB9"/>
<dbReference type="STRING" id="380703.AHA_1129"/>
<dbReference type="EnsemblBacteria" id="ABK37654">
    <property type="protein sequence ID" value="ABK37654"/>
    <property type="gene ID" value="AHA_1129"/>
</dbReference>
<dbReference type="GeneID" id="4490758"/>
<dbReference type="KEGG" id="aha:AHA_1129"/>
<dbReference type="PATRIC" id="fig|380703.7.peg.1133"/>
<dbReference type="eggNOG" id="COG1666">
    <property type="taxonomic scope" value="Bacteria"/>
</dbReference>
<dbReference type="HOGENOM" id="CLU_099839_1_0_6"/>
<dbReference type="OrthoDB" id="9801447at2"/>
<dbReference type="Proteomes" id="UP000000756">
    <property type="component" value="Chromosome"/>
</dbReference>
<dbReference type="GO" id="GO:0005829">
    <property type="term" value="C:cytosol"/>
    <property type="evidence" value="ECO:0007669"/>
    <property type="project" value="TreeGrafter"/>
</dbReference>
<dbReference type="GO" id="GO:0000166">
    <property type="term" value="F:nucleotide binding"/>
    <property type="evidence" value="ECO:0007669"/>
    <property type="project" value="TreeGrafter"/>
</dbReference>
<dbReference type="CDD" id="cd11740">
    <property type="entry name" value="YajQ_like"/>
    <property type="match status" value="1"/>
</dbReference>
<dbReference type="FunFam" id="3.30.70.860:FF:000001">
    <property type="entry name" value="UPF0234 protein YajQ"/>
    <property type="match status" value="1"/>
</dbReference>
<dbReference type="Gene3D" id="3.30.70.860">
    <property type="match status" value="1"/>
</dbReference>
<dbReference type="Gene3D" id="3.30.70.990">
    <property type="entry name" value="YajQ-like, domain 2"/>
    <property type="match status" value="1"/>
</dbReference>
<dbReference type="HAMAP" id="MF_00632">
    <property type="entry name" value="YajQ"/>
    <property type="match status" value="1"/>
</dbReference>
<dbReference type="InterPro" id="IPR007551">
    <property type="entry name" value="DUF520"/>
</dbReference>
<dbReference type="InterPro" id="IPR035571">
    <property type="entry name" value="UPF0234-like_C"/>
</dbReference>
<dbReference type="InterPro" id="IPR035570">
    <property type="entry name" value="UPF0234_N"/>
</dbReference>
<dbReference type="InterPro" id="IPR036183">
    <property type="entry name" value="YajQ-like_sf"/>
</dbReference>
<dbReference type="NCBIfam" id="NF003819">
    <property type="entry name" value="PRK05412.1"/>
    <property type="match status" value="1"/>
</dbReference>
<dbReference type="PANTHER" id="PTHR30476">
    <property type="entry name" value="UPF0234 PROTEIN YAJQ"/>
    <property type="match status" value="1"/>
</dbReference>
<dbReference type="PANTHER" id="PTHR30476:SF0">
    <property type="entry name" value="UPF0234 PROTEIN YAJQ"/>
    <property type="match status" value="1"/>
</dbReference>
<dbReference type="Pfam" id="PF04461">
    <property type="entry name" value="DUF520"/>
    <property type="match status" value="1"/>
</dbReference>
<dbReference type="SUPFAM" id="SSF89963">
    <property type="entry name" value="YajQ-like"/>
    <property type="match status" value="2"/>
</dbReference>
<evidence type="ECO:0000255" key="1">
    <source>
        <dbReference type="HAMAP-Rule" id="MF_00632"/>
    </source>
</evidence>
<gene>
    <name type="ordered locus">AHA_1129</name>
</gene>
<sequence>MPSFDIVSEVKMNEVLNAVDNANRELATRFDFRGVEASFELNKEEVKLEADADFQLKQMVEILRAALLKRNIENSSMDVGDSVHSGKRFHLTVKFKQGIDKEVAKKLVKLIKDSKIKVQAAIQGDEVRVTGKKRDDLQETMALVRGAELGQPMQFQNFRD</sequence>
<keyword id="KW-0547">Nucleotide-binding</keyword>
<keyword id="KW-1185">Reference proteome</keyword>